<evidence type="ECO:0000250" key="1">
    <source>
        <dbReference type="UniProtKB" id="C1DMX5"/>
    </source>
</evidence>
<evidence type="ECO:0000250" key="2">
    <source>
        <dbReference type="UniProtKB" id="O93868"/>
    </source>
</evidence>
<evidence type="ECO:0000269" key="3">
    <source>
    </source>
</evidence>
<evidence type="ECO:0000303" key="4">
    <source>
    </source>
</evidence>
<evidence type="ECO:0000305" key="5"/>
<evidence type="ECO:0000305" key="6">
    <source>
    </source>
</evidence>
<evidence type="ECO:0000312" key="7">
    <source>
        <dbReference type="EMBL" id="EAT09360.1"/>
    </source>
</evidence>
<accession>Q1NEJ0</accession>
<sequence>MKLLEGKTVLVTGASTGIGRAAAIGAAQHGADVAINYAHSDGPAQSCVAEIEALGQRAIAVKGDVADPQTAQDFVAKAVETFGKVDVMVSNAGICPFHAFLDMPVDVVERTFKVNLHGAYFMVQAAAQQMVRQGHGGSIVAVSSISALVGGEYQTHYTPTKAGVHSLMQSTAIALGKHGIRCNSVLPGTILTEINKDDLADQEKREYMEARTPLGRLGAPEDLAGPIVFLASDMAAYVTGAALLVDGGMYVNLQ</sequence>
<reference key="1">
    <citation type="submission" date="2006-03" db="EMBL/GenBank/DDBJ databases">
        <authorList>
            <person name="Hagstrom A."/>
            <person name="Ferriera S."/>
            <person name="Johnson J."/>
            <person name="Kravitz S."/>
            <person name="Halpern A."/>
            <person name="Remington K."/>
            <person name="Beeson K."/>
            <person name="Tran B."/>
            <person name="Rogers Y.-H."/>
            <person name="Friedman R."/>
            <person name="Venter J.C."/>
        </authorList>
    </citation>
    <scope>NUCLEOTIDE SEQUENCE [LARGE SCALE GENOMIC DNA]</scope>
    <source>
        <strain>SKA58</strain>
    </source>
</reference>
<reference key="2">
    <citation type="journal article" date="2009" name="FEBS J.">
        <title>Novel modified version of nonphosphorylated sugar metabolism--an alternative L-rhamnose pathway of Sphingomonas sp.</title>
        <authorList>
            <person name="Watanabe S."/>
            <person name="Makino K."/>
        </authorList>
    </citation>
    <scope>PROTEIN SEQUENCE OF 1-20</scope>
    <scope>FUNCTION</scope>
    <scope>CATALYTIC ACTIVITY</scope>
    <scope>PATHWAY</scope>
    <source>
        <strain>NBRC 101715</strain>
    </source>
</reference>
<comment type="function">
    <text evidence="3">NAD(P)-dependent dehydrogenase that catalyzes the oxidation of L-rhamnose to L-rhamnono-1,4-lactone (PubMed:19187228). Also shows high activity with L-lyxose and low activity with L-mannose (PubMed:19187228). Can utilize either NAD(+) or NADP(+), with a slight preference for NADP(+) (PubMed:19187228). Catalyzes the first step in an alternative pathway for rhamnose utilization that does not involve phosphorylated intermediates (PubMed:19187228).</text>
</comment>
<comment type="catalytic activity">
    <reaction evidence="3">
        <text>L-rhamnofuranose + NAD(+) = L-rhamnono-1,4-lactone + NADH + H(+)</text>
        <dbReference type="Rhea" id="RHEA:12649"/>
        <dbReference type="ChEBI" id="CHEBI:15378"/>
        <dbReference type="ChEBI" id="CHEBI:16935"/>
        <dbReference type="ChEBI" id="CHEBI:17937"/>
        <dbReference type="ChEBI" id="CHEBI:57540"/>
        <dbReference type="ChEBI" id="CHEBI:57945"/>
        <dbReference type="EC" id="1.1.1.378"/>
    </reaction>
    <physiologicalReaction direction="left-to-right" evidence="3">
        <dbReference type="Rhea" id="RHEA:12650"/>
    </physiologicalReaction>
</comment>
<comment type="catalytic activity">
    <reaction evidence="3">
        <text>L-rhamnofuranose + NADP(+) = L-rhamnono-1,4-lactone + NADPH + H(+)</text>
        <dbReference type="Rhea" id="RHEA:42668"/>
        <dbReference type="ChEBI" id="CHEBI:15378"/>
        <dbReference type="ChEBI" id="CHEBI:16935"/>
        <dbReference type="ChEBI" id="CHEBI:17937"/>
        <dbReference type="ChEBI" id="CHEBI:57783"/>
        <dbReference type="ChEBI" id="CHEBI:58349"/>
        <dbReference type="EC" id="1.1.1.378"/>
    </reaction>
    <physiologicalReaction direction="left-to-right" evidence="3">
        <dbReference type="Rhea" id="RHEA:42669"/>
    </physiologicalReaction>
</comment>
<comment type="pathway">
    <text evidence="6">Carbohydrate degradation; L-rhamnose degradation.</text>
</comment>
<comment type="similarity">
    <text evidence="5">Belongs to the short-chain dehydrogenases/reductases (SDR) family.</text>
</comment>
<feature type="chain" id="PRO_0000461192" description="L-rhamnose 1-dehydrogenase (NAD(P)(+))">
    <location>
        <begin position="1"/>
        <end position="254"/>
    </location>
</feature>
<feature type="active site" description="Proton donor" evidence="2">
    <location>
        <position position="144"/>
    </location>
</feature>
<feature type="active site" description="Proton acceptor" evidence="2">
    <location>
        <position position="157"/>
    </location>
</feature>
<feature type="active site" description="Lowers pKa of active site Tyr" evidence="2">
    <location>
        <position position="161"/>
    </location>
</feature>
<feature type="binding site" evidence="1">
    <location>
        <position position="13"/>
    </location>
    <ligand>
        <name>NADP(+)</name>
        <dbReference type="ChEBI" id="CHEBI:58349"/>
    </ligand>
</feature>
<feature type="binding site" evidence="1">
    <location>
        <position position="15"/>
    </location>
    <ligand>
        <name>NADP(+)</name>
        <dbReference type="ChEBI" id="CHEBI:58349"/>
    </ligand>
</feature>
<feature type="binding site" evidence="1">
    <location>
        <position position="18"/>
    </location>
    <ligand>
        <name>NADP(+)</name>
        <dbReference type="ChEBI" id="CHEBI:58349"/>
    </ligand>
</feature>
<feature type="binding site" evidence="1">
    <location>
        <position position="64"/>
    </location>
    <ligand>
        <name>NADP(+)</name>
        <dbReference type="ChEBI" id="CHEBI:58349"/>
    </ligand>
</feature>
<feature type="binding site" evidence="1">
    <location>
        <position position="65"/>
    </location>
    <ligand>
        <name>NADP(+)</name>
        <dbReference type="ChEBI" id="CHEBI:58349"/>
    </ligand>
</feature>
<feature type="binding site" evidence="1">
    <location>
        <position position="91"/>
    </location>
    <ligand>
        <name>NADP(+)</name>
        <dbReference type="ChEBI" id="CHEBI:58349"/>
    </ligand>
</feature>
<feature type="binding site" evidence="1">
    <location>
        <position position="144"/>
    </location>
    <ligand>
        <name>beta-L-rhamnose</name>
        <dbReference type="ChEBI" id="CHEBI:27586"/>
    </ligand>
</feature>
<feature type="binding site" evidence="1">
    <location>
        <position position="146"/>
    </location>
    <ligand>
        <name>beta-L-rhamnose</name>
        <dbReference type="ChEBI" id="CHEBI:27586"/>
    </ligand>
</feature>
<feature type="binding site" evidence="1">
    <location>
        <position position="154"/>
    </location>
    <ligand>
        <name>beta-L-rhamnose</name>
        <dbReference type="ChEBI" id="CHEBI:27586"/>
    </ligand>
</feature>
<feature type="binding site" evidence="1">
    <location>
        <position position="157"/>
    </location>
    <ligand>
        <name>beta-L-rhamnose</name>
        <dbReference type="ChEBI" id="CHEBI:27586"/>
    </ligand>
</feature>
<feature type="binding site" evidence="1">
    <location>
        <position position="157"/>
    </location>
    <ligand>
        <name>NADP(+)</name>
        <dbReference type="ChEBI" id="CHEBI:58349"/>
    </ligand>
</feature>
<feature type="binding site" evidence="1">
    <location>
        <position position="161"/>
    </location>
    <ligand>
        <name>NADP(+)</name>
        <dbReference type="ChEBI" id="CHEBI:58349"/>
    </ligand>
</feature>
<feature type="binding site" evidence="1">
    <location>
        <position position="189"/>
    </location>
    <ligand>
        <name>beta-L-rhamnose</name>
        <dbReference type="ChEBI" id="CHEBI:27586"/>
    </ligand>
</feature>
<feature type="binding site" evidence="1">
    <location>
        <position position="190"/>
    </location>
    <ligand>
        <name>NADP(+)</name>
        <dbReference type="ChEBI" id="CHEBI:58349"/>
    </ligand>
</feature>
<feature type="binding site" evidence="1">
    <location>
        <position position="195"/>
    </location>
    <ligand>
        <name>beta-L-rhamnose</name>
        <dbReference type="ChEBI" id="CHEBI:27586"/>
    </ligand>
</feature>
<feature type="sequence conflict" description="In Ref. 2; AA sequence." evidence="5" ref="2">
    <original>V</original>
    <variation>A</variation>
    <location>
        <position position="11"/>
    </location>
</feature>
<dbReference type="EC" id="1.1.1.378" evidence="3"/>
<dbReference type="EMBL" id="AAQG01000004">
    <property type="protein sequence ID" value="EAT09360.1"/>
    <property type="molecule type" value="Genomic_DNA"/>
</dbReference>
<dbReference type="RefSeq" id="WP_009820498.1">
    <property type="nucleotide sequence ID" value="NZ_CH959306.1"/>
</dbReference>
<dbReference type="SMR" id="Q1NEJ0"/>
<dbReference type="STRING" id="314266.SKA58_03570"/>
<dbReference type="KEGG" id="ag:EAT09360"/>
<dbReference type="eggNOG" id="COG1028">
    <property type="taxonomic scope" value="Bacteria"/>
</dbReference>
<dbReference type="HOGENOM" id="CLU_010194_1_1_5"/>
<dbReference type="OrthoDB" id="9790146at2"/>
<dbReference type="BioCyc" id="MetaCyc:MONOMER-16231"/>
<dbReference type="UniPathway" id="UPA00541"/>
<dbReference type="Proteomes" id="UP000005395">
    <property type="component" value="Unassembled WGS sequence"/>
</dbReference>
<dbReference type="GO" id="GO:0000166">
    <property type="term" value="F:nucleotide binding"/>
    <property type="evidence" value="ECO:0007669"/>
    <property type="project" value="UniProtKB-KW"/>
</dbReference>
<dbReference type="GO" id="GO:0016616">
    <property type="term" value="F:oxidoreductase activity, acting on the CH-OH group of donors, NAD or NADP as acceptor"/>
    <property type="evidence" value="ECO:0007669"/>
    <property type="project" value="TreeGrafter"/>
</dbReference>
<dbReference type="GO" id="GO:0048038">
    <property type="term" value="F:quinone binding"/>
    <property type="evidence" value="ECO:0007669"/>
    <property type="project" value="TreeGrafter"/>
</dbReference>
<dbReference type="GO" id="GO:0006633">
    <property type="term" value="P:fatty acid biosynthetic process"/>
    <property type="evidence" value="ECO:0007669"/>
    <property type="project" value="TreeGrafter"/>
</dbReference>
<dbReference type="GO" id="GO:0019299">
    <property type="term" value="P:rhamnose metabolic process"/>
    <property type="evidence" value="ECO:0007669"/>
    <property type="project" value="UniProtKB-KW"/>
</dbReference>
<dbReference type="FunFam" id="3.40.50.720:FF:000417">
    <property type="entry name" value="Glucose 1-dehydrogenase, putative"/>
    <property type="match status" value="1"/>
</dbReference>
<dbReference type="Gene3D" id="3.40.50.720">
    <property type="entry name" value="NAD(P)-binding Rossmann-like Domain"/>
    <property type="match status" value="1"/>
</dbReference>
<dbReference type="InterPro" id="IPR036291">
    <property type="entry name" value="NAD(P)-bd_dom_sf"/>
</dbReference>
<dbReference type="InterPro" id="IPR002347">
    <property type="entry name" value="SDR_fam"/>
</dbReference>
<dbReference type="NCBIfam" id="NF005559">
    <property type="entry name" value="PRK07231.1"/>
    <property type="match status" value="1"/>
</dbReference>
<dbReference type="PANTHER" id="PTHR42760:SF83">
    <property type="entry name" value="(3R)-3-HYDROXYACYL-COA DEHYDROGENASE"/>
    <property type="match status" value="1"/>
</dbReference>
<dbReference type="PANTHER" id="PTHR42760">
    <property type="entry name" value="SHORT-CHAIN DEHYDROGENASES/REDUCTASES FAMILY MEMBER"/>
    <property type="match status" value="1"/>
</dbReference>
<dbReference type="Pfam" id="PF13561">
    <property type="entry name" value="adh_short_C2"/>
    <property type="match status" value="1"/>
</dbReference>
<dbReference type="PRINTS" id="PR00081">
    <property type="entry name" value="GDHRDH"/>
</dbReference>
<dbReference type="PRINTS" id="PR00080">
    <property type="entry name" value="SDRFAMILY"/>
</dbReference>
<dbReference type="SUPFAM" id="SSF51735">
    <property type="entry name" value="NAD(P)-binding Rossmann-fold domains"/>
    <property type="match status" value="1"/>
</dbReference>
<gene>
    <name evidence="4" type="primary">LRA1</name>
    <name evidence="7" type="ORF">SKA58_03570</name>
</gene>
<protein>
    <recommendedName>
        <fullName evidence="4">L-rhamnose 1-dehydrogenase (NAD(P)(+))</fullName>
        <shortName evidence="5">RhaDH</shortName>
        <ecNumber evidence="3">1.1.1.378</ecNumber>
    </recommendedName>
    <alternativeName>
        <fullName evidence="4">SpLRA1</fullName>
    </alternativeName>
</protein>
<organism>
    <name type="scientific">Sphingomonas sp. (strain SKA58)</name>
    <dbReference type="NCBI Taxonomy" id="314266"/>
    <lineage>
        <taxon>Bacteria</taxon>
        <taxon>Pseudomonadati</taxon>
        <taxon>Pseudomonadota</taxon>
        <taxon>Alphaproteobacteria</taxon>
        <taxon>Sphingomonadales</taxon>
        <taxon>Sphingomonadaceae</taxon>
        <taxon>Sphingomonas</taxon>
    </lineage>
</organism>
<proteinExistence type="evidence at protein level"/>
<keyword id="KW-0903">Direct protein sequencing</keyword>
<keyword id="KW-0520">NAD</keyword>
<keyword id="KW-0521">NADP</keyword>
<keyword id="KW-0547">Nucleotide-binding</keyword>
<keyword id="KW-0560">Oxidoreductase</keyword>
<keyword id="KW-1185">Reference proteome</keyword>
<keyword id="KW-0684">Rhamnose metabolism</keyword>
<name>RHAD_SPHSS</name>